<organism>
    <name type="scientific">Flavobacterium psychrophilum (strain ATCC 49511 / DSM 21280 / CIP 103535 / JIP02/86)</name>
    <dbReference type="NCBI Taxonomy" id="402612"/>
    <lineage>
        <taxon>Bacteria</taxon>
        <taxon>Pseudomonadati</taxon>
        <taxon>Bacteroidota</taxon>
        <taxon>Flavobacteriia</taxon>
        <taxon>Flavobacteriales</taxon>
        <taxon>Flavobacteriaceae</taxon>
        <taxon>Flavobacterium</taxon>
    </lineage>
</organism>
<dbReference type="EC" id="6.5.1.2" evidence="1"/>
<dbReference type="EMBL" id="AM398681">
    <property type="protein sequence ID" value="CAL43913.1"/>
    <property type="molecule type" value="Genomic_DNA"/>
</dbReference>
<dbReference type="RefSeq" id="WP_011963952.1">
    <property type="nucleotide sequence ID" value="NC_009613.3"/>
</dbReference>
<dbReference type="RefSeq" id="YP_001296716.1">
    <property type="nucleotide sequence ID" value="NC_009613.3"/>
</dbReference>
<dbReference type="SMR" id="A6H0N9"/>
<dbReference type="STRING" id="402612.FP1847"/>
<dbReference type="EnsemblBacteria" id="CAL43913">
    <property type="protein sequence ID" value="CAL43913"/>
    <property type="gene ID" value="FP1847"/>
</dbReference>
<dbReference type="GeneID" id="66551969"/>
<dbReference type="KEGG" id="fps:FP1847"/>
<dbReference type="PATRIC" id="fig|402612.5.peg.1873"/>
<dbReference type="eggNOG" id="COG0272">
    <property type="taxonomic scope" value="Bacteria"/>
</dbReference>
<dbReference type="HOGENOM" id="CLU_007764_2_0_10"/>
<dbReference type="OrthoDB" id="9759736at2"/>
<dbReference type="Proteomes" id="UP000006394">
    <property type="component" value="Chromosome"/>
</dbReference>
<dbReference type="GO" id="GO:0005829">
    <property type="term" value="C:cytosol"/>
    <property type="evidence" value="ECO:0007669"/>
    <property type="project" value="TreeGrafter"/>
</dbReference>
<dbReference type="GO" id="GO:0003911">
    <property type="term" value="F:DNA ligase (NAD+) activity"/>
    <property type="evidence" value="ECO:0007669"/>
    <property type="project" value="UniProtKB-UniRule"/>
</dbReference>
<dbReference type="GO" id="GO:0046872">
    <property type="term" value="F:metal ion binding"/>
    <property type="evidence" value="ECO:0007669"/>
    <property type="project" value="UniProtKB-KW"/>
</dbReference>
<dbReference type="GO" id="GO:0006281">
    <property type="term" value="P:DNA repair"/>
    <property type="evidence" value="ECO:0007669"/>
    <property type="project" value="UniProtKB-KW"/>
</dbReference>
<dbReference type="GO" id="GO:0006260">
    <property type="term" value="P:DNA replication"/>
    <property type="evidence" value="ECO:0007669"/>
    <property type="project" value="UniProtKB-KW"/>
</dbReference>
<dbReference type="CDD" id="cd17748">
    <property type="entry name" value="BRCT_DNA_ligase_like"/>
    <property type="match status" value="1"/>
</dbReference>
<dbReference type="CDD" id="cd00114">
    <property type="entry name" value="LIGANc"/>
    <property type="match status" value="1"/>
</dbReference>
<dbReference type="FunFam" id="1.10.150.20:FF:000006">
    <property type="entry name" value="DNA ligase"/>
    <property type="match status" value="1"/>
</dbReference>
<dbReference type="FunFam" id="1.10.150.20:FF:000007">
    <property type="entry name" value="DNA ligase"/>
    <property type="match status" value="1"/>
</dbReference>
<dbReference type="FunFam" id="2.40.50.140:FF:000012">
    <property type="entry name" value="DNA ligase"/>
    <property type="match status" value="1"/>
</dbReference>
<dbReference type="FunFam" id="3.30.470.30:FF:000001">
    <property type="entry name" value="DNA ligase"/>
    <property type="match status" value="1"/>
</dbReference>
<dbReference type="Gene3D" id="6.20.10.30">
    <property type="match status" value="1"/>
</dbReference>
<dbReference type="Gene3D" id="1.10.150.20">
    <property type="entry name" value="5' to 3' exonuclease, C-terminal subdomain"/>
    <property type="match status" value="2"/>
</dbReference>
<dbReference type="Gene3D" id="3.40.50.10190">
    <property type="entry name" value="BRCT domain"/>
    <property type="match status" value="1"/>
</dbReference>
<dbReference type="Gene3D" id="3.30.470.30">
    <property type="entry name" value="DNA ligase/mRNA capping enzyme"/>
    <property type="match status" value="1"/>
</dbReference>
<dbReference type="Gene3D" id="1.10.287.610">
    <property type="entry name" value="Helix hairpin bin"/>
    <property type="match status" value="1"/>
</dbReference>
<dbReference type="Gene3D" id="2.40.50.140">
    <property type="entry name" value="Nucleic acid-binding proteins"/>
    <property type="match status" value="1"/>
</dbReference>
<dbReference type="HAMAP" id="MF_01588">
    <property type="entry name" value="DNA_ligase_A"/>
    <property type="match status" value="1"/>
</dbReference>
<dbReference type="InterPro" id="IPR001357">
    <property type="entry name" value="BRCT_dom"/>
</dbReference>
<dbReference type="InterPro" id="IPR036420">
    <property type="entry name" value="BRCT_dom_sf"/>
</dbReference>
<dbReference type="InterPro" id="IPR041663">
    <property type="entry name" value="DisA/LigA_HHH"/>
</dbReference>
<dbReference type="InterPro" id="IPR001679">
    <property type="entry name" value="DNA_ligase"/>
</dbReference>
<dbReference type="InterPro" id="IPR033136">
    <property type="entry name" value="DNA_ligase_CS"/>
</dbReference>
<dbReference type="InterPro" id="IPR013839">
    <property type="entry name" value="DNAligase_adenylation"/>
</dbReference>
<dbReference type="InterPro" id="IPR013840">
    <property type="entry name" value="DNAligase_N"/>
</dbReference>
<dbReference type="InterPro" id="IPR012340">
    <property type="entry name" value="NA-bd_OB-fold"/>
</dbReference>
<dbReference type="InterPro" id="IPR004150">
    <property type="entry name" value="NAD_DNA_ligase_OB"/>
</dbReference>
<dbReference type="InterPro" id="IPR010994">
    <property type="entry name" value="RuvA_2-like"/>
</dbReference>
<dbReference type="InterPro" id="IPR004149">
    <property type="entry name" value="Znf_DNAligase_C4"/>
</dbReference>
<dbReference type="NCBIfam" id="TIGR00575">
    <property type="entry name" value="dnlj"/>
    <property type="match status" value="1"/>
</dbReference>
<dbReference type="NCBIfam" id="NF005932">
    <property type="entry name" value="PRK07956.1"/>
    <property type="match status" value="1"/>
</dbReference>
<dbReference type="PANTHER" id="PTHR23389">
    <property type="entry name" value="CHROMOSOME TRANSMISSION FIDELITY FACTOR 18"/>
    <property type="match status" value="1"/>
</dbReference>
<dbReference type="PANTHER" id="PTHR23389:SF9">
    <property type="entry name" value="DNA LIGASE"/>
    <property type="match status" value="1"/>
</dbReference>
<dbReference type="Pfam" id="PF00533">
    <property type="entry name" value="BRCT"/>
    <property type="match status" value="1"/>
</dbReference>
<dbReference type="Pfam" id="PF01653">
    <property type="entry name" value="DNA_ligase_aden"/>
    <property type="match status" value="1"/>
</dbReference>
<dbReference type="Pfam" id="PF03120">
    <property type="entry name" value="DNA_ligase_OB"/>
    <property type="match status" value="1"/>
</dbReference>
<dbReference type="Pfam" id="PF03119">
    <property type="entry name" value="DNA_ligase_ZBD"/>
    <property type="match status" value="1"/>
</dbReference>
<dbReference type="Pfam" id="PF12826">
    <property type="entry name" value="HHH_2"/>
    <property type="match status" value="1"/>
</dbReference>
<dbReference type="Pfam" id="PF22745">
    <property type="entry name" value="Nlig-Ia"/>
    <property type="match status" value="1"/>
</dbReference>
<dbReference type="PIRSF" id="PIRSF001604">
    <property type="entry name" value="LigA"/>
    <property type="match status" value="1"/>
</dbReference>
<dbReference type="SMART" id="SM00292">
    <property type="entry name" value="BRCT"/>
    <property type="match status" value="1"/>
</dbReference>
<dbReference type="SMART" id="SM00532">
    <property type="entry name" value="LIGANc"/>
    <property type="match status" value="1"/>
</dbReference>
<dbReference type="SUPFAM" id="SSF52113">
    <property type="entry name" value="BRCT domain"/>
    <property type="match status" value="1"/>
</dbReference>
<dbReference type="SUPFAM" id="SSF56091">
    <property type="entry name" value="DNA ligase/mRNA capping enzyme, catalytic domain"/>
    <property type="match status" value="1"/>
</dbReference>
<dbReference type="SUPFAM" id="SSF50249">
    <property type="entry name" value="Nucleic acid-binding proteins"/>
    <property type="match status" value="1"/>
</dbReference>
<dbReference type="SUPFAM" id="SSF47781">
    <property type="entry name" value="RuvA domain 2-like"/>
    <property type="match status" value="1"/>
</dbReference>
<dbReference type="PROSITE" id="PS50172">
    <property type="entry name" value="BRCT"/>
    <property type="match status" value="1"/>
</dbReference>
<dbReference type="PROSITE" id="PS01056">
    <property type="entry name" value="DNA_LIGASE_N2"/>
    <property type="match status" value="1"/>
</dbReference>
<proteinExistence type="inferred from homology"/>
<comment type="function">
    <text evidence="1">DNA ligase that catalyzes the formation of phosphodiester linkages between 5'-phosphoryl and 3'-hydroxyl groups in double-stranded DNA using NAD as a coenzyme and as the energy source for the reaction. It is essential for DNA replication and repair of damaged DNA.</text>
</comment>
<comment type="catalytic activity">
    <reaction evidence="1">
        <text>NAD(+) + (deoxyribonucleotide)n-3'-hydroxyl + 5'-phospho-(deoxyribonucleotide)m = (deoxyribonucleotide)n+m + AMP + beta-nicotinamide D-nucleotide.</text>
        <dbReference type="EC" id="6.5.1.2"/>
    </reaction>
</comment>
<comment type="cofactor">
    <cofactor evidence="1">
        <name>Mg(2+)</name>
        <dbReference type="ChEBI" id="CHEBI:18420"/>
    </cofactor>
    <cofactor evidence="1">
        <name>Mn(2+)</name>
        <dbReference type="ChEBI" id="CHEBI:29035"/>
    </cofactor>
</comment>
<comment type="similarity">
    <text evidence="1">Belongs to the NAD-dependent DNA ligase family. LigA subfamily.</text>
</comment>
<reference key="1">
    <citation type="journal article" date="2007" name="Nat. Biotechnol.">
        <title>Complete genome sequence of the fish pathogen Flavobacterium psychrophilum.</title>
        <authorList>
            <person name="Duchaud E."/>
            <person name="Boussaha M."/>
            <person name="Loux V."/>
            <person name="Bernardet J.-F."/>
            <person name="Michel C."/>
            <person name="Kerouault B."/>
            <person name="Mondot S."/>
            <person name="Nicolas P."/>
            <person name="Bossy R."/>
            <person name="Caron C."/>
            <person name="Bessieres P."/>
            <person name="Gibrat J.-F."/>
            <person name="Claverol S."/>
            <person name="Dumetz F."/>
            <person name="Le Henaff M."/>
            <person name="Benmansour A."/>
        </authorList>
    </citation>
    <scope>NUCLEOTIDE SEQUENCE [LARGE SCALE GENOMIC DNA]</scope>
    <source>
        <strain>ATCC 49511 / DSM 21280 / CIP 103535 / JIP02/86</strain>
    </source>
</reference>
<sequence length="666" mass="75008">MTVLQKIQSLREELNLHNYNYYVLDNPTISDYDFDVKLTDLQSLEKNNPEYFDENSPTQRVGGTITKNFETLKHDYRMYSLDNSYSKEDLLDWENRIQKALGDVPLEYICELKYDGASISITYENGRLVRAVTRGDGFQGDDVTNNIKTIKAVPIKLKGDFPEKFDIRGEIILPFAGFEKMNQDLIEIGETPYSNPRNTASGSLKLQDSAEVAKRPLDCLLYSLIGNNLPFQSHFEGLEKARLWGFKVPKQSHLAKNMNEVFDFINIWDKNRHTLPYETDGVVIKVNDLHLQDELGYTAKSPRWAIAYKFKSEQVFTQLNSISYQVGRTGSITPVANLEPVQLAGTIVKRASLHNADQIEKLDIRINDTVFVEKGGEIIPKIIGVDLQKRPSNSQKTAYITHCPECQTKLERKEGEANHYCPNFYGCRPQIIGRIQHYISRKAMDIEGLGGETVALLYDNGLVKNYADLYDLSVEQILPLERMAQKSAENLVQGVQNSKNIPFENVLFALGIRYVGETVAKKLAKHYKNIDAIANANLLELVMVDEIGDKIAQSVVEFFDNQENISVLERLKNNGIQLAISEENNTVVSNKLLGKIFVVSGVFEIYSRDELKKAIEDNGGKVGSSISAKTNYVIAGQNMGPAKLEKANQLKVSIISESDFSALLTS</sequence>
<gene>
    <name evidence="1" type="primary">ligA</name>
    <name type="ordered locus">FP1847</name>
</gene>
<accession>A6H0N9</accession>
<feature type="chain" id="PRO_0000313236" description="DNA ligase">
    <location>
        <begin position="1"/>
        <end position="666"/>
    </location>
</feature>
<feature type="domain" description="BRCT" evidence="1">
    <location>
        <begin position="587"/>
        <end position="666"/>
    </location>
</feature>
<feature type="active site" description="N6-AMP-lysine intermediate" evidence="1">
    <location>
        <position position="113"/>
    </location>
</feature>
<feature type="binding site" evidence="1">
    <location>
        <begin position="31"/>
        <end position="35"/>
    </location>
    <ligand>
        <name>NAD(+)</name>
        <dbReference type="ChEBI" id="CHEBI:57540"/>
    </ligand>
</feature>
<feature type="binding site" evidence="1">
    <location>
        <begin position="80"/>
        <end position="81"/>
    </location>
    <ligand>
        <name>NAD(+)</name>
        <dbReference type="ChEBI" id="CHEBI:57540"/>
    </ligand>
</feature>
<feature type="binding site" evidence="1">
    <location>
        <position position="111"/>
    </location>
    <ligand>
        <name>NAD(+)</name>
        <dbReference type="ChEBI" id="CHEBI:57540"/>
    </ligand>
</feature>
<feature type="binding site" evidence="1">
    <location>
        <position position="134"/>
    </location>
    <ligand>
        <name>NAD(+)</name>
        <dbReference type="ChEBI" id="CHEBI:57540"/>
    </ligand>
</feature>
<feature type="binding site" evidence="1">
    <location>
        <position position="170"/>
    </location>
    <ligand>
        <name>NAD(+)</name>
        <dbReference type="ChEBI" id="CHEBI:57540"/>
    </ligand>
</feature>
<feature type="binding site" evidence="1">
    <location>
        <position position="285"/>
    </location>
    <ligand>
        <name>NAD(+)</name>
        <dbReference type="ChEBI" id="CHEBI:57540"/>
    </ligand>
</feature>
<feature type="binding site" evidence="1">
    <location>
        <position position="309"/>
    </location>
    <ligand>
        <name>NAD(+)</name>
        <dbReference type="ChEBI" id="CHEBI:57540"/>
    </ligand>
</feature>
<feature type="binding site" evidence="1">
    <location>
        <position position="403"/>
    </location>
    <ligand>
        <name>Zn(2+)</name>
        <dbReference type="ChEBI" id="CHEBI:29105"/>
    </ligand>
</feature>
<feature type="binding site" evidence="1">
    <location>
        <position position="406"/>
    </location>
    <ligand>
        <name>Zn(2+)</name>
        <dbReference type="ChEBI" id="CHEBI:29105"/>
    </ligand>
</feature>
<feature type="binding site" evidence="1">
    <location>
        <position position="421"/>
    </location>
    <ligand>
        <name>Zn(2+)</name>
        <dbReference type="ChEBI" id="CHEBI:29105"/>
    </ligand>
</feature>
<feature type="binding site" evidence="1">
    <location>
        <position position="427"/>
    </location>
    <ligand>
        <name>Zn(2+)</name>
        <dbReference type="ChEBI" id="CHEBI:29105"/>
    </ligand>
</feature>
<evidence type="ECO:0000255" key="1">
    <source>
        <dbReference type="HAMAP-Rule" id="MF_01588"/>
    </source>
</evidence>
<protein>
    <recommendedName>
        <fullName evidence="1">DNA ligase</fullName>
        <ecNumber evidence="1">6.5.1.2</ecNumber>
    </recommendedName>
    <alternativeName>
        <fullName evidence="1">Polydeoxyribonucleotide synthase [NAD(+)]</fullName>
    </alternativeName>
</protein>
<name>DNLJ_FLAPJ</name>
<keyword id="KW-0227">DNA damage</keyword>
<keyword id="KW-0234">DNA repair</keyword>
<keyword id="KW-0235">DNA replication</keyword>
<keyword id="KW-0436">Ligase</keyword>
<keyword id="KW-0460">Magnesium</keyword>
<keyword id="KW-0464">Manganese</keyword>
<keyword id="KW-0479">Metal-binding</keyword>
<keyword id="KW-0520">NAD</keyword>
<keyword id="KW-1185">Reference proteome</keyword>
<keyword id="KW-0862">Zinc</keyword>